<gene>
    <name type="ORF">IIV6-259R</name>
</gene>
<comment type="subcellular location">
    <subcellularLocation>
        <location evidence="3">Membrane</location>
        <topology evidence="3">Single-pass membrane protein</topology>
    </subcellularLocation>
</comment>
<comment type="similarity">
    <text evidence="3">Belongs to the IIV-6 259R family.</text>
</comment>
<sequence>MTTKHELVINTNEPSAPNADSFYPSYSNETSFSPQYQRDFSGFSGGGMIGEKMATRYEGRTLPRDSLMMIESQSPLNHRKTDFNDKTKTLPVYKNGGYPNLETFKVSRRETDEEEEHFKDYKINKISEYIKYLDTEIKDRERLKKNYGKLDKTLFGVECSCMITELGVTGTSFFIPPMVVISTPICLGLTVFSTVLRNGSKLITKKIDKHAHIELLAKSKRNSIDEKYTKAMEDGVISESEFQDIRKEIYNYDEMKKSILNQFKNNSQAIELTKEAQLTLINKGKEEMKEEFKIKLNKL</sequence>
<protein>
    <recommendedName>
        <fullName>Uncharacterized protein 259R</fullName>
    </recommendedName>
</protein>
<proteinExistence type="inferred from homology"/>
<dbReference type="EMBL" id="AF303741">
    <property type="protein sequence ID" value="AAK82120.1"/>
    <property type="molecule type" value="Genomic_DNA"/>
</dbReference>
<dbReference type="RefSeq" id="NP_149722.1">
    <property type="nucleotide sequence ID" value="NC_003038.1"/>
</dbReference>
<dbReference type="SMR" id="Q91FR3"/>
<dbReference type="KEGG" id="vg:1733155"/>
<dbReference type="OrthoDB" id="32903at10239"/>
<dbReference type="Proteomes" id="UP000001359">
    <property type="component" value="Genome"/>
</dbReference>
<dbReference type="GO" id="GO:0016020">
    <property type="term" value="C:membrane"/>
    <property type="evidence" value="ECO:0007669"/>
    <property type="project" value="UniProtKB-SubCell"/>
</dbReference>
<keyword id="KW-0472">Membrane</keyword>
<keyword id="KW-1185">Reference proteome</keyword>
<keyword id="KW-0812">Transmembrane</keyword>
<keyword id="KW-1133">Transmembrane helix</keyword>
<organismHost>
    <name type="scientific">Acheta domesticus</name>
    <name type="common">House cricket</name>
    <dbReference type="NCBI Taxonomy" id="6997"/>
</organismHost>
<organismHost>
    <name type="scientific">Chilo suppressalis</name>
    <name type="common">Asiatic rice borer moth</name>
    <dbReference type="NCBI Taxonomy" id="168631"/>
</organismHost>
<organismHost>
    <name type="scientific">Gryllus bimaculatus</name>
    <name type="common">Two-spotted cricket</name>
    <dbReference type="NCBI Taxonomy" id="6999"/>
</organismHost>
<organismHost>
    <name type="scientific">Gryllus campestris</name>
    <dbReference type="NCBI Taxonomy" id="58607"/>
</organismHost>
<organismHost>
    <name type="scientific">Spodoptera frugiperda</name>
    <name type="common">Fall armyworm</name>
    <dbReference type="NCBI Taxonomy" id="7108"/>
</organismHost>
<feature type="chain" id="PRO_0000377836" description="Uncharacterized protein 259R">
    <location>
        <begin position="1"/>
        <end position="299"/>
    </location>
</feature>
<feature type="transmembrane region" description="Helical" evidence="1">
    <location>
        <begin position="172"/>
        <end position="192"/>
    </location>
</feature>
<feature type="region of interest" description="Disordered" evidence="2">
    <location>
        <begin position="1"/>
        <end position="20"/>
    </location>
</feature>
<evidence type="ECO:0000255" key="1"/>
<evidence type="ECO:0000256" key="2">
    <source>
        <dbReference type="SAM" id="MobiDB-lite"/>
    </source>
</evidence>
<evidence type="ECO:0000305" key="3"/>
<reference key="1">
    <citation type="journal article" date="2001" name="Virology">
        <title>Analysis of the first complete DNA sequence of an invertebrate iridovirus: coding strategy of the genome of Chilo iridescent virus.</title>
        <authorList>
            <person name="Jakob N.J."/>
            <person name="Mueller K."/>
            <person name="Bahr U."/>
            <person name="Darai G."/>
        </authorList>
    </citation>
    <scope>NUCLEOTIDE SEQUENCE [LARGE SCALE GENOMIC DNA]</scope>
</reference>
<reference key="2">
    <citation type="journal article" date="2007" name="Virol. J.">
        <title>Comparative genomic analysis of the family Iridoviridae: re-annotating and defining the core set of iridovirus genes.</title>
        <authorList>
            <person name="Eaton H.E."/>
            <person name="Metcalf J."/>
            <person name="Penny E."/>
            <person name="Tcherepanov V."/>
            <person name="Upton C."/>
            <person name="Brunetti C.R."/>
        </authorList>
    </citation>
    <scope>GENOME REANNOTATION</scope>
</reference>
<name>VF259_IIV6</name>
<organism>
    <name type="scientific">Invertebrate iridescent virus 6</name>
    <name type="common">IIV-6</name>
    <name type="synonym">Chilo iridescent virus</name>
    <dbReference type="NCBI Taxonomy" id="176652"/>
    <lineage>
        <taxon>Viruses</taxon>
        <taxon>Varidnaviria</taxon>
        <taxon>Bamfordvirae</taxon>
        <taxon>Nucleocytoviricota</taxon>
        <taxon>Megaviricetes</taxon>
        <taxon>Pimascovirales</taxon>
        <taxon>Iridoviridae</taxon>
        <taxon>Betairidovirinae</taxon>
        <taxon>Iridovirus</taxon>
    </lineage>
</organism>
<accession>Q91FR3</accession>